<dbReference type="EMBL" id="AP009369">
    <property type="protein sequence ID" value="BAF50021.1"/>
    <property type="molecule type" value="Genomic_DNA"/>
</dbReference>
<dbReference type="RefSeq" id="YP_001123197.1">
    <property type="nucleotide sequence ID" value="NC_009268.1"/>
</dbReference>
<dbReference type="SMR" id="A4QK16"/>
<dbReference type="GeneID" id="4962513"/>
<dbReference type="GO" id="GO:0009507">
    <property type="term" value="C:chloroplast"/>
    <property type="evidence" value="ECO:0007669"/>
    <property type="project" value="UniProtKB-SubCell"/>
</dbReference>
<dbReference type="GO" id="GO:0015935">
    <property type="term" value="C:small ribosomal subunit"/>
    <property type="evidence" value="ECO:0007669"/>
    <property type="project" value="TreeGrafter"/>
</dbReference>
<dbReference type="GO" id="GO:0019843">
    <property type="term" value="F:rRNA binding"/>
    <property type="evidence" value="ECO:0007669"/>
    <property type="project" value="UniProtKB-UniRule"/>
</dbReference>
<dbReference type="GO" id="GO:0003735">
    <property type="term" value="F:structural constituent of ribosome"/>
    <property type="evidence" value="ECO:0007669"/>
    <property type="project" value="InterPro"/>
</dbReference>
<dbReference type="GO" id="GO:0006412">
    <property type="term" value="P:translation"/>
    <property type="evidence" value="ECO:0007669"/>
    <property type="project" value="UniProtKB-UniRule"/>
</dbReference>
<dbReference type="FunFam" id="1.10.287.1480:FF:000001">
    <property type="entry name" value="30S ribosomal protein S14"/>
    <property type="match status" value="1"/>
</dbReference>
<dbReference type="Gene3D" id="1.10.287.1480">
    <property type="match status" value="1"/>
</dbReference>
<dbReference type="HAMAP" id="MF_00537">
    <property type="entry name" value="Ribosomal_uS14_1"/>
    <property type="match status" value="1"/>
</dbReference>
<dbReference type="InterPro" id="IPR001209">
    <property type="entry name" value="Ribosomal_uS14"/>
</dbReference>
<dbReference type="InterPro" id="IPR023036">
    <property type="entry name" value="Ribosomal_uS14_bac/plastid"/>
</dbReference>
<dbReference type="InterPro" id="IPR018271">
    <property type="entry name" value="Ribosomal_uS14_CS"/>
</dbReference>
<dbReference type="NCBIfam" id="NF006477">
    <property type="entry name" value="PRK08881.1"/>
    <property type="match status" value="1"/>
</dbReference>
<dbReference type="PANTHER" id="PTHR19836">
    <property type="entry name" value="30S RIBOSOMAL PROTEIN S14"/>
    <property type="match status" value="1"/>
</dbReference>
<dbReference type="PANTHER" id="PTHR19836:SF19">
    <property type="entry name" value="SMALL RIBOSOMAL SUBUNIT PROTEIN US14M"/>
    <property type="match status" value="1"/>
</dbReference>
<dbReference type="Pfam" id="PF00253">
    <property type="entry name" value="Ribosomal_S14"/>
    <property type="match status" value="1"/>
</dbReference>
<dbReference type="SUPFAM" id="SSF57716">
    <property type="entry name" value="Glucocorticoid receptor-like (DNA-binding domain)"/>
    <property type="match status" value="1"/>
</dbReference>
<dbReference type="PROSITE" id="PS00527">
    <property type="entry name" value="RIBOSOMAL_S14"/>
    <property type="match status" value="1"/>
</dbReference>
<accession>A4QK16</accession>
<sequence length="100" mass="11752">MAKKSLIYREKKRQKLEQKYHLIRRSSKKEISQIPSLSEKWKIHGKLQSPPRNSAPTRLHRRCFSTGRPRANYRDFGLSGHILREMVHACLLPGATRSSW</sequence>
<keyword id="KW-0150">Chloroplast</keyword>
<keyword id="KW-0934">Plastid</keyword>
<keyword id="KW-0687">Ribonucleoprotein</keyword>
<keyword id="KW-0689">Ribosomal protein</keyword>
<keyword id="KW-0694">RNA-binding</keyword>
<keyword id="KW-0699">rRNA-binding</keyword>
<evidence type="ECO:0000255" key="1">
    <source>
        <dbReference type="HAMAP-Rule" id="MF_00537"/>
    </source>
</evidence>
<evidence type="ECO:0000305" key="2"/>
<feature type="chain" id="PRO_0000354399" description="Small ribosomal subunit protein uS14c">
    <location>
        <begin position="1"/>
        <end position="100"/>
    </location>
</feature>
<proteinExistence type="inferred from homology"/>
<protein>
    <recommendedName>
        <fullName evidence="1">Small ribosomal subunit protein uS14c</fullName>
    </recommendedName>
    <alternativeName>
        <fullName evidence="2">30S ribosomal protein S14, chloroplastic</fullName>
    </alternativeName>
</protein>
<organism>
    <name type="scientific">Arabis hirsuta</name>
    <name type="common">Hairy rock-cress</name>
    <name type="synonym">Turritis hirsuta</name>
    <dbReference type="NCBI Taxonomy" id="78191"/>
    <lineage>
        <taxon>Eukaryota</taxon>
        <taxon>Viridiplantae</taxon>
        <taxon>Streptophyta</taxon>
        <taxon>Embryophyta</taxon>
        <taxon>Tracheophyta</taxon>
        <taxon>Spermatophyta</taxon>
        <taxon>Magnoliopsida</taxon>
        <taxon>eudicotyledons</taxon>
        <taxon>Gunneridae</taxon>
        <taxon>Pentapetalae</taxon>
        <taxon>rosids</taxon>
        <taxon>malvids</taxon>
        <taxon>Brassicales</taxon>
        <taxon>Brassicaceae</taxon>
        <taxon>Arabideae</taxon>
        <taxon>Arabis</taxon>
    </lineage>
</organism>
<name>RR14_ARAHI</name>
<reference key="1">
    <citation type="submission" date="2007-03" db="EMBL/GenBank/DDBJ databases">
        <title>Sequencing analysis of Arabis hirsuta chloroplast DNA.</title>
        <authorList>
            <person name="Hosouchi T."/>
            <person name="Tsuruoka H."/>
            <person name="Kotani H."/>
        </authorList>
    </citation>
    <scope>NUCLEOTIDE SEQUENCE [LARGE SCALE GENOMIC DNA]</scope>
</reference>
<comment type="function">
    <text evidence="1">Binds 16S rRNA, required for the assembly of 30S particles.</text>
</comment>
<comment type="subunit">
    <text evidence="1">Part of the 30S ribosomal subunit.</text>
</comment>
<comment type="subcellular location">
    <subcellularLocation>
        <location>Plastid</location>
        <location>Chloroplast</location>
    </subcellularLocation>
</comment>
<comment type="similarity">
    <text evidence="1">Belongs to the universal ribosomal protein uS14 family.</text>
</comment>
<gene>
    <name evidence="1" type="primary">rps14</name>
</gene>
<geneLocation type="chloroplast"/>